<keyword id="KW-0238">DNA-binding</keyword>
<keyword id="KW-0539">Nucleus</keyword>
<keyword id="KW-1185">Reference proteome</keyword>
<keyword id="KW-0678">Repressor</keyword>
<keyword id="KW-0804">Transcription</keyword>
<keyword id="KW-0805">Transcription regulation</keyword>
<organism>
    <name type="scientific">Xenopus laevis</name>
    <name type="common">African clawed frog</name>
    <dbReference type="NCBI Taxonomy" id="8355"/>
    <lineage>
        <taxon>Eukaryota</taxon>
        <taxon>Metazoa</taxon>
        <taxon>Chordata</taxon>
        <taxon>Craniata</taxon>
        <taxon>Vertebrata</taxon>
        <taxon>Euteleostomi</taxon>
        <taxon>Amphibia</taxon>
        <taxon>Batrachia</taxon>
        <taxon>Anura</taxon>
        <taxon>Pipoidea</taxon>
        <taxon>Pipidae</taxon>
        <taxon>Xenopodinae</taxon>
        <taxon>Xenopus</taxon>
        <taxon>Xenopus</taxon>
    </lineage>
</organism>
<dbReference type="EMBL" id="AF015454">
    <property type="protein sequence ID" value="AAB81217.2"/>
    <property type="molecule type" value="mRNA"/>
</dbReference>
<dbReference type="EMBL" id="BC055961">
    <property type="protein sequence ID" value="AAH55961.1"/>
    <property type="molecule type" value="mRNA"/>
</dbReference>
<dbReference type="RefSeq" id="NP_001080278.1">
    <property type="nucleotide sequence ID" value="NM_001086809.1"/>
</dbReference>
<dbReference type="DNASU" id="379970"/>
<dbReference type="GeneID" id="379970"/>
<dbReference type="KEGG" id="xla:379970"/>
<dbReference type="AGR" id="Xenbase:XB-GENE-974221"/>
<dbReference type="CTD" id="379970"/>
<dbReference type="Xenbase" id="XB-GENE-974221">
    <property type="gene designation" value="mier1.L"/>
</dbReference>
<dbReference type="OrthoDB" id="5916873at2759"/>
<dbReference type="Proteomes" id="UP000186698">
    <property type="component" value="Chromosome 4L"/>
</dbReference>
<dbReference type="Bgee" id="379970">
    <property type="expression patterns" value="Expressed in egg cell and 19 other cell types or tissues"/>
</dbReference>
<dbReference type="GO" id="GO:0005654">
    <property type="term" value="C:nucleoplasm"/>
    <property type="evidence" value="ECO:0000318"/>
    <property type="project" value="GO_Central"/>
</dbReference>
<dbReference type="GO" id="GO:0017053">
    <property type="term" value="C:transcription repressor complex"/>
    <property type="evidence" value="ECO:0000250"/>
    <property type="project" value="UniProtKB"/>
</dbReference>
<dbReference type="GO" id="GO:0003677">
    <property type="term" value="F:DNA binding"/>
    <property type="evidence" value="ECO:0007669"/>
    <property type="project" value="UniProtKB-KW"/>
</dbReference>
<dbReference type="GO" id="GO:0042826">
    <property type="term" value="F:histone deacetylase binding"/>
    <property type="evidence" value="ECO:0000318"/>
    <property type="project" value="GO_Central"/>
</dbReference>
<dbReference type="GO" id="GO:0003714">
    <property type="term" value="F:transcription corepressor activity"/>
    <property type="evidence" value="ECO:0000318"/>
    <property type="project" value="GO_Central"/>
</dbReference>
<dbReference type="GO" id="GO:0006338">
    <property type="term" value="P:chromatin remodeling"/>
    <property type="evidence" value="ECO:0000250"/>
    <property type="project" value="UniProtKB"/>
</dbReference>
<dbReference type="GO" id="GO:0000122">
    <property type="term" value="P:negative regulation of transcription by RNA polymerase II"/>
    <property type="evidence" value="ECO:0000318"/>
    <property type="project" value="GO_Central"/>
</dbReference>
<dbReference type="GO" id="GO:0006355">
    <property type="term" value="P:regulation of DNA-templated transcription"/>
    <property type="evidence" value="ECO:0000250"/>
    <property type="project" value="UniProtKB"/>
</dbReference>
<dbReference type="CDD" id="cd11661">
    <property type="entry name" value="SANT_MTA3_like"/>
    <property type="match status" value="1"/>
</dbReference>
<dbReference type="FunFam" id="1.10.10.60:FF:000025">
    <property type="entry name" value="Mesoderm induction early response 1, transcriptional regulator"/>
    <property type="match status" value="1"/>
</dbReference>
<dbReference type="Gene3D" id="1.10.10.60">
    <property type="entry name" value="Homeodomain-like"/>
    <property type="match status" value="1"/>
</dbReference>
<dbReference type="InterPro" id="IPR000949">
    <property type="entry name" value="ELM2_dom"/>
</dbReference>
<dbReference type="InterPro" id="IPR009057">
    <property type="entry name" value="Homeodomain-like_sf"/>
</dbReference>
<dbReference type="InterPro" id="IPR040138">
    <property type="entry name" value="MIER/MTA"/>
</dbReference>
<dbReference type="InterPro" id="IPR045787">
    <property type="entry name" value="MIER1/3_C"/>
</dbReference>
<dbReference type="InterPro" id="IPR001005">
    <property type="entry name" value="SANT/Myb"/>
</dbReference>
<dbReference type="InterPro" id="IPR017884">
    <property type="entry name" value="SANT_dom"/>
</dbReference>
<dbReference type="PANTHER" id="PTHR10865:SF24">
    <property type="entry name" value="MESODERM INDUCTION EARLY RESPONSE PROTEIN 1"/>
    <property type="match status" value="1"/>
</dbReference>
<dbReference type="PANTHER" id="PTHR10865">
    <property type="entry name" value="METASTASIS-ASSOCIATED PROTEIN AND MESODERM INDUCTION EARLY RESPONSE PROTEIN"/>
    <property type="match status" value="1"/>
</dbReference>
<dbReference type="Pfam" id="PF01448">
    <property type="entry name" value="ELM2"/>
    <property type="match status" value="1"/>
</dbReference>
<dbReference type="Pfam" id="PF19426">
    <property type="entry name" value="MIER1_3_C"/>
    <property type="match status" value="1"/>
</dbReference>
<dbReference type="Pfam" id="PF00249">
    <property type="entry name" value="Myb_DNA-binding"/>
    <property type="match status" value="1"/>
</dbReference>
<dbReference type="SMART" id="SM01189">
    <property type="entry name" value="ELM2"/>
    <property type="match status" value="1"/>
</dbReference>
<dbReference type="SMART" id="SM00717">
    <property type="entry name" value="SANT"/>
    <property type="match status" value="1"/>
</dbReference>
<dbReference type="SUPFAM" id="SSF46689">
    <property type="entry name" value="Homeodomain-like"/>
    <property type="match status" value="1"/>
</dbReference>
<dbReference type="PROSITE" id="PS51156">
    <property type="entry name" value="ELM2"/>
    <property type="match status" value="1"/>
</dbReference>
<dbReference type="PROSITE" id="PS51293">
    <property type="entry name" value="SANT"/>
    <property type="match status" value="1"/>
</dbReference>
<comment type="function">
    <text evidence="1">Transcriptional repressor regulating the expression of a number of genes. Probably functions through recruitment of histone deacetylases involved in chromatin silencing (By similarity).</text>
</comment>
<comment type="subcellular location">
    <subcellularLocation>
        <location>Nucleus</location>
    </subcellularLocation>
</comment>
<comment type="developmental stage">
    <text evidence="5">Predominantly expressed during the initial cleavage and blastula stage. Little expression in the further development.</text>
</comment>
<sequence>MAEPSLRTASPGGSAASDDHEFEPSADMLVHEFDDEQTLEEEEMLEGEVNFTSEIEHLERESEMPIDELLRLYGYGSTVPLPGEEEEDEEDMDNDCNSGCSGEIKDEAIKDSSGQEDETQSSNDDPTPSFTCRDVREVIRPRRCKYFDTNHEIEEESEDDEDYVPSEDWKKEIMVGSMFQAEIPVGICKYRETEKVYENDDQLLWDPEYVMEERVIDFLNEASRRTCEERGLDAIPEGSHIKDNEQALYELVKCNFDTEEALRRLRFNVKAAREELSVWTEEECRNFEQGLKAYGKDFHLIQANKVRTRSVGECVAFYYMWKKSERYDFFAQQTRFGKKKYNLHPGVTDYMDRLLDESESATSSRAPSPPPTTSNSNTSQSEKEDCTASNNTQNGVSVNGPCAITAYKDEAKQGVHLNGPTISSSDPSSNETDTNGYNRENVTDDSRFSHTSGKTDTNPDDTNERPIKRQRMDSPGKESTGSSEFSQEVFSHGEV</sequence>
<gene>
    <name type="primary">mier1</name>
</gene>
<evidence type="ECO:0000250" key="1"/>
<evidence type="ECO:0000255" key="2">
    <source>
        <dbReference type="PROSITE-ProRule" id="PRU00512"/>
    </source>
</evidence>
<evidence type="ECO:0000255" key="3">
    <source>
        <dbReference type="PROSITE-ProRule" id="PRU00624"/>
    </source>
</evidence>
<evidence type="ECO:0000256" key="4">
    <source>
        <dbReference type="SAM" id="MobiDB-lite"/>
    </source>
</evidence>
<evidence type="ECO:0000269" key="5">
    <source>
    </source>
</evidence>
<evidence type="ECO:0000305" key="6"/>
<proteinExistence type="evidence at transcript level"/>
<reference key="1">
    <citation type="journal article" date="1997" name="J. Biol. Chem.">
        <title>cDNA cloning of a novel, developmentally regulated immediate early gene activated by fibroblast growth factor and encoding a nuclear protein.</title>
        <authorList>
            <person name="Paterno G.D."/>
            <person name="Li Y."/>
            <person name="Luchman H.A."/>
            <person name="Ryan P.J."/>
            <person name="Gillespie L.L."/>
        </authorList>
    </citation>
    <scope>NUCLEOTIDE SEQUENCE [MRNA]</scope>
    <scope>DEVELOPMENTAL STAGE</scope>
    <source>
        <tissue>Blastula</tissue>
    </source>
</reference>
<reference key="2">
    <citation type="submission" date="2003-08" db="EMBL/GenBank/DDBJ databases">
        <authorList>
            <consortium name="NIH - Xenopus Gene Collection (XGC) project"/>
        </authorList>
    </citation>
    <scope>NUCLEOTIDE SEQUENCE [LARGE SCALE MRNA]</scope>
    <source>
        <tissue>Embryo</tissue>
    </source>
</reference>
<name>MIER1_XENLA</name>
<protein>
    <recommendedName>
        <fullName>Mesoderm induction early response protein 1</fullName>
        <shortName>Early response 1</shortName>
        <shortName>Er1</shortName>
        <shortName>Mi-er1</shortName>
        <shortName>Xmi-er1</shortName>
    </recommendedName>
</protein>
<feature type="chain" id="PRO_0000197145" description="Mesoderm induction early response protein 1">
    <location>
        <begin position="1"/>
        <end position="495"/>
    </location>
</feature>
<feature type="domain" description="ELM2" evidence="2">
    <location>
        <begin position="171"/>
        <end position="269"/>
    </location>
</feature>
<feature type="domain" description="SANT" evidence="3">
    <location>
        <begin position="274"/>
        <end position="326"/>
    </location>
</feature>
<feature type="region of interest" description="Disordered" evidence="4">
    <location>
        <begin position="1"/>
        <end position="25"/>
    </location>
</feature>
<feature type="region of interest" description="Disordered" evidence="4">
    <location>
        <begin position="76"/>
        <end position="131"/>
    </location>
</feature>
<feature type="region of interest" description="Disordered" evidence="4">
    <location>
        <begin position="356"/>
        <end position="397"/>
    </location>
</feature>
<feature type="region of interest" description="Disordered" evidence="4">
    <location>
        <begin position="416"/>
        <end position="495"/>
    </location>
</feature>
<feature type="compositionally biased region" description="Acidic residues" evidence="4">
    <location>
        <begin position="83"/>
        <end position="94"/>
    </location>
</feature>
<feature type="compositionally biased region" description="Polar residues" evidence="4">
    <location>
        <begin position="120"/>
        <end position="130"/>
    </location>
</feature>
<feature type="compositionally biased region" description="Polar residues" evidence="4">
    <location>
        <begin position="387"/>
        <end position="397"/>
    </location>
</feature>
<feature type="compositionally biased region" description="Polar residues" evidence="4">
    <location>
        <begin position="420"/>
        <end position="440"/>
    </location>
</feature>
<feature type="compositionally biased region" description="Basic and acidic residues" evidence="4">
    <location>
        <begin position="462"/>
        <end position="476"/>
    </location>
</feature>
<feature type="compositionally biased region" description="Polar residues" evidence="4">
    <location>
        <begin position="477"/>
        <end position="489"/>
    </location>
</feature>
<feature type="sequence conflict" description="In Ref. 1." evidence="6" ref="1">
    <location>
        <begin position="85"/>
        <end position="86"/>
    </location>
</feature>
<feature type="sequence conflict" description="In Ref. 1; AAB81217." evidence="6" ref="1">
    <original>D</original>
    <variation>N</variation>
    <location>
        <position position="206"/>
    </location>
</feature>
<accession>Q7T105</accession>
<accession>O42194</accession>